<proteinExistence type="predicted"/>
<sequence length="140" mass="16441">MTQPDIEIVIKEDFTYRECSDVANDVFKKTQWLLYVFLFIIFANCVVDVKYYFEGFSHSLLFVYFFLTLIILLVSFMGFHYLNSIPKPEAEPDYRKKQESKNQDFLKSQSNEPLEYASSSAVELEKEKNTREGLTILESS</sequence>
<gene>
    <name type="ORF">SPCC622.04</name>
</gene>
<feature type="chain" id="PRO_0000303964" description="Putative uncharacterized membrane protein C622.04">
    <location>
        <begin position="1"/>
        <end position="140"/>
    </location>
</feature>
<feature type="transmembrane region" description="Helical" evidence="1">
    <location>
        <begin position="33"/>
        <end position="53"/>
    </location>
</feature>
<feature type="transmembrane region" description="Helical" evidence="1">
    <location>
        <begin position="59"/>
        <end position="79"/>
    </location>
</feature>
<feature type="region of interest" description="Disordered" evidence="2">
    <location>
        <begin position="89"/>
        <end position="140"/>
    </location>
</feature>
<feature type="compositionally biased region" description="Basic and acidic residues" evidence="2">
    <location>
        <begin position="89"/>
        <end position="104"/>
    </location>
</feature>
<feature type="compositionally biased region" description="Polar residues" evidence="2">
    <location>
        <begin position="105"/>
        <end position="121"/>
    </location>
</feature>
<reference key="1">
    <citation type="journal article" date="2002" name="Nature">
        <title>The genome sequence of Schizosaccharomyces pombe.</title>
        <authorList>
            <person name="Wood V."/>
            <person name="Gwilliam R."/>
            <person name="Rajandream M.A."/>
            <person name="Lyne M.H."/>
            <person name="Lyne R."/>
            <person name="Stewart A."/>
            <person name="Sgouros J.G."/>
            <person name="Peat N."/>
            <person name="Hayles J."/>
            <person name="Baker S.G."/>
            <person name="Basham D."/>
            <person name="Bowman S."/>
            <person name="Brooks K."/>
            <person name="Brown D."/>
            <person name="Brown S."/>
            <person name="Chillingworth T."/>
            <person name="Churcher C.M."/>
            <person name="Collins M."/>
            <person name="Connor R."/>
            <person name="Cronin A."/>
            <person name="Davis P."/>
            <person name="Feltwell T."/>
            <person name="Fraser A."/>
            <person name="Gentles S."/>
            <person name="Goble A."/>
            <person name="Hamlin N."/>
            <person name="Harris D.E."/>
            <person name="Hidalgo J."/>
            <person name="Hodgson G."/>
            <person name="Holroyd S."/>
            <person name="Hornsby T."/>
            <person name="Howarth S."/>
            <person name="Huckle E.J."/>
            <person name="Hunt S."/>
            <person name="Jagels K."/>
            <person name="James K.D."/>
            <person name="Jones L."/>
            <person name="Jones M."/>
            <person name="Leather S."/>
            <person name="McDonald S."/>
            <person name="McLean J."/>
            <person name="Mooney P."/>
            <person name="Moule S."/>
            <person name="Mungall K.L."/>
            <person name="Murphy L.D."/>
            <person name="Niblett D."/>
            <person name="Odell C."/>
            <person name="Oliver K."/>
            <person name="O'Neil S."/>
            <person name="Pearson D."/>
            <person name="Quail M.A."/>
            <person name="Rabbinowitsch E."/>
            <person name="Rutherford K.M."/>
            <person name="Rutter S."/>
            <person name="Saunders D."/>
            <person name="Seeger K."/>
            <person name="Sharp S."/>
            <person name="Skelton J."/>
            <person name="Simmonds M.N."/>
            <person name="Squares R."/>
            <person name="Squares S."/>
            <person name="Stevens K."/>
            <person name="Taylor K."/>
            <person name="Taylor R.G."/>
            <person name="Tivey A."/>
            <person name="Walsh S.V."/>
            <person name="Warren T."/>
            <person name="Whitehead S."/>
            <person name="Woodward J.R."/>
            <person name="Volckaert G."/>
            <person name="Aert R."/>
            <person name="Robben J."/>
            <person name="Grymonprez B."/>
            <person name="Weltjens I."/>
            <person name="Vanstreels E."/>
            <person name="Rieger M."/>
            <person name="Schaefer M."/>
            <person name="Mueller-Auer S."/>
            <person name="Gabel C."/>
            <person name="Fuchs M."/>
            <person name="Duesterhoeft A."/>
            <person name="Fritzc C."/>
            <person name="Holzer E."/>
            <person name="Moestl D."/>
            <person name="Hilbert H."/>
            <person name="Borzym K."/>
            <person name="Langer I."/>
            <person name="Beck A."/>
            <person name="Lehrach H."/>
            <person name="Reinhardt R."/>
            <person name="Pohl T.M."/>
            <person name="Eger P."/>
            <person name="Zimmermann W."/>
            <person name="Wedler H."/>
            <person name="Wambutt R."/>
            <person name="Purnelle B."/>
            <person name="Goffeau A."/>
            <person name="Cadieu E."/>
            <person name="Dreano S."/>
            <person name="Gloux S."/>
            <person name="Lelaure V."/>
            <person name="Mottier S."/>
            <person name="Galibert F."/>
            <person name="Aves S.J."/>
            <person name="Xiang Z."/>
            <person name="Hunt C."/>
            <person name="Moore K."/>
            <person name="Hurst S.M."/>
            <person name="Lucas M."/>
            <person name="Rochet M."/>
            <person name="Gaillardin C."/>
            <person name="Tallada V.A."/>
            <person name="Garzon A."/>
            <person name="Thode G."/>
            <person name="Daga R.R."/>
            <person name="Cruzado L."/>
            <person name="Jimenez J."/>
            <person name="Sanchez M."/>
            <person name="del Rey F."/>
            <person name="Benito J."/>
            <person name="Dominguez A."/>
            <person name="Revuelta J.L."/>
            <person name="Moreno S."/>
            <person name="Armstrong J."/>
            <person name="Forsburg S.L."/>
            <person name="Cerutti L."/>
            <person name="Lowe T."/>
            <person name="McCombie W.R."/>
            <person name="Paulsen I."/>
            <person name="Potashkin J."/>
            <person name="Shpakovski G.V."/>
            <person name="Ussery D."/>
            <person name="Barrell B.G."/>
            <person name="Nurse P."/>
        </authorList>
    </citation>
    <scope>NUCLEOTIDE SEQUENCE [LARGE SCALE GENOMIC DNA]</scope>
    <source>
        <strain>972 / ATCC 24843</strain>
    </source>
</reference>
<organism>
    <name type="scientific">Schizosaccharomyces pombe (strain 972 / ATCC 24843)</name>
    <name type="common">Fission yeast</name>
    <dbReference type="NCBI Taxonomy" id="284812"/>
    <lineage>
        <taxon>Eukaryota</taxon>
        <taxon>Fungi</taxon>
        <taxon>Dikarya</taxon>
        <taxon>Ascomycota</taxon>
        <taxon>Taphrinomycotina</taxon>
        <taxon>Schizosaccharomycetes</taxon>
        <taxon>Schizosaccharomycetales</taxon>
        <taxon>Schizosaccharomycetaceae</taxon>
        <taxon>Schizosaccharomyces</taxon>
    </lineage>
</organism>
<name>YC84_SCHPO</name>
<dbReference type="EMBL" id="CU329672">
    <property type="protein sequence ID" value="CAA21860.1"/>
    <property type="molecule type" value="Genomic_DNA"/>
</dbReference>
<dbReference type="PIR" id="T41484">
    <property type="entry name" value="T41484"/>
</dbReference>
<dbReference type="RefSeq" id="NP_588176.1">
    <property type="nucleotide sequence ID" value="NM_001023166.2"/>
</dbReference>
<dbReference type="SMR" id="O94594"/>
<dbReference type="BioGRID" id="275333">
    <property type="interactions" value="4"/>
</dbReference>
<dbReference type="PaxDb" id="4896-SPCC622.04.1"/>
<dbReference type="EnsemblFungi" id="SPCC622.04.1">
    <property type="protein sequence ID" value="SPCC622.04.1:pep"/>
    <property type="gene ID" value="SPCC622.04"/>
</dbReference>
<dbReference type="KEGG" id="spo:2538750"/>
<dbReference type="PomBase" id="SPCC622.04"/>
<dbReference type="VEuPathDB" id="FungiDB:SPCC622.04"/>
<dbReference type="HOGENOM" id="CLU_1960859_0_0_1"/>
<dbReference type="InParanoid" id="O94594"/>
<dbReference type="PRO" id="PR:O94594"/>
<dbReference type="Proteomes" id="UP000002485">
    <property type="component" value="Chromosome III"/>
</dbReference>
<dbReference type="GO" id="GO:0016020">
    <property type="term" value="C:membrane"/>
    <property type="evidence" value="ECO:0007669"/>
    <property type="project" value="UniProtKB-SubCell"/>
</dbReference>
<comment type="subcellular location">
    <subcellularLocation>
        <location evidence="3">Membrane</location>
        <topology evidence="3">Multi-pass membrane protein</topology>
    </subcellularLocation>
</comment>
<protein>
    <recommendedName>
        <fullName>Putative uncharacterized membrane protein C622.04</fullName>
    </recommendedName>
</protein>
<accession>O94594</accession>
<evidence type="ECO:0000255" key="1"/>
<evidence type="ECO:0000256" key="2">
    <source>
        <dbReference type="SAM" id="MobiDB-lite"/>
    </source>
</evidence>
<evidence type="ECO:0000305" key="3"/>
<keyword id="KW-0472">Membrane</keyword>
<keyword id="KW-1185">Reference proteome</keyword>
<keyword id="KW-0812">Transmembrane</keyword>
<keyword id="KW-1133">Transmembrane helix</keyword>